<keyword id="KW-0963">Cytoplasm</keyword>
<keyword id="KW-0227">DNA damage</keyword>
<keyword id="KW-0234">DNA repair</keyword>
<keyword id="KW-0378">Hydrolase</keyword>
<feature type="chain" id="PRO_0000176145" description="Uracil-DNA glycosylase">
    <location>
        <begin position="1"/>
        <end position="217"/>
    </location>
</feature>
<feature type="active site" description="Proton acceptor" evidence="1">
    <location>
        <position position="62"/>
    </location>
</feature>
<evidence type="ECO:0000250" key="1"/>
<evidence type="ECO:0000305" key="2"/>
<comment type="function">
    <text evidence="1">Excises uracil residues from the DNA which can arise as a result of misincorporation of dUMP residues by DNA polymerase or due to deamination of cytosine.</text>
</comment>
<comment type="catalytic activity">
    <reaction>
        <text>Hydrolyzes single-stranded DNA or mismatched double-stranded DNA and polynucleotides, releasing free uracil.</text>
        <dbReference type="EC" id="3.2.2.27"/>
    </reaction>
</comment>
<comment type="subcellular location">
    <subcellularLocation>
        <location evidence="1">Cytoplasm</location>
    </subcellularLocation>
</comment>
<comment type="similarity">
    <text evidence="2">Belongs to the uracil-DNA glycosylase (UDG) superfamily. UNG family.</text>
</comment>
<accession>P0A4P3</accession>
<accession>Q9XDS8</accession>
<reference key="1">
    <citation type="journal article" date="2002" name="Mol. Microbiol.">
        <title>Genome sequence of Streptococcus agalactiae, a pathogen causing invasive neonatal disease.</title>
        <authorList>
            <person name="Glaser P."/>
            <person name="Rusniok C."/>
            <person name="Buchrieser C."/>
            <person name="Chevalier F."/>
            <person name="Frangeul L."/>
            <person name="Msadek T."/>
            <person name="Zouine M."/>
            <person name="Couve E."/>
            <person name="Lalioui L."/>
            <person name="Poyart C."/>
            <person name="Trieu-Cuot P."/>
            <person name="Kunst F."/>
        </authorList>
    </citation>
    <scope>NUCLEOTIDE SEQUENCE [LARGE SCALE GENOMIC DNA]</scope>
    <source>
        <strain>NEM316</strain>
    </source>
</reference>
<gene>
    <name type="primary">ung</name>
    <name type="ordered locus">gbs1231</name>
</gene>
<name>UNG_STRA3</name>
<dbReference type="EC" id="3.2.2.27"/>
<dbReference type="EMBL" id="AL766849">
    <property type="protein sequence ID" value="CAD46890.1"/>
    <property type="molecule type" value="Genomic_DNA"/>
</dbReference>
<dbReference type="RefSeq" id="WP_000682955.1">
    <property type="nucleotide sequence ID" value="NC_004368.1"/>
</dbReference>
<dbReference type="SMR" id="P0A4P3"/>
<dbReference type="KEGG" id="san:ung"/>
<dbReference type="eggNOG" id="COG0692">
    <property type="taxonomic scope" value="Bacteria"/>
</dbReference>
<dbReference type="HOGENOM" id="CLU_032162_3_1_9"/>
<dbReference type="Proteomes" id="UP000000823">
    <property type="component" value="Chromosome"/>
</dbReference>
<dbReference type="GO" id="GO:0005737">
    <property type="term" value="C:cytoplasm"/>
    <property type="evidence" value="ECO:0007669"/>
    <property type="project" value="UniProtKB-SubCell"/>
</dbReference>
<dbReference type="GO" id="GO:0004844">
    <property type="term" value="F:uracil DNA N-glycosylase activity"/>
    <property type="evidence" value="ECO:0007669"/>
    <property type="project" value="UniProtKB-UniRule"/>
</dbReference>
<dbReference type="GO" id="GO:0097510">
    <property type="term" value="P:base-excision repair, AP site formation via deaminated base removal"/>
    <property type="evidence" value="ECO:0007669"/>
    <property type="project" value="TreeGrafter"/>
</dbReference>
<dbReference type="CDD" id="cd10027">
    <property type="entry name" value="UDG-F1-like"/>
    <property type="match status" value="1"/>
</dbReference>
<dbReference type="FunFam" id="3.40.470.10:FF:000008">
    <property type="entry name" value="Uracil-DNA glycosylase"/>
    <property type="match status" value="1"/>
</dbReference>
<dbReference type="Gene3D" id="3.40.470.10">
    <property type="entry name" value="Uracil-DNA glycosylase-like domain"/>
    <property type="match status" value="1"/>
</dbReference>
<dbReference type="HAMAP" id="MF_00148">
    <property type="entry name" value="UDG"/>
    <property type="match status" value="1"/>
</dbReference>
<dbReference type="InterPro" id="IPR002043">
    <property type="entry name" value="UDG_fam1"/>
</dbReference>
<dbReference type="InterPro" id="IPR018085">
    <property type="entry name" value="Ura-DNA_Glyclase_AS"/>
</dbReference>
<dbReference type="InterPro" id="IPR005122">
    <property type="entry name" value="Uracil-DNA_glycosylase-like"/>
</dbReference>
<dbReference type="InterPro" id="IPR036895">
    <property type="entry name" value="Uracil-DNA_glycosylase-like_sf"/>
</dbReference>
<dbReference type="NCBIfam" id="NF003588">
    <property type="entry name" value="PRK05254.1-1"/>
    <property type="match status" value="1"/>
</dbReference>
<dbReference type="NCBIfam" id="NF003589">
    <property type="entry name" value="PRK05254.1-2"/>
    <property type="match status" value="1"/>
</dbReference>
<dbReference type="NCBIfam" id="NF003591">
    <property type="entry name" value="PRK05254.1-4"/>
    <property type="match status" value="1"/>
</dbReference>
<dbReference type="NCBIfam" id="NF003592">
    <property type="entry name" value="PRK05254.1-5"/>
    <property type="match status" value="1"/>
</dbReference>
<dbReference type="NCBIfam" id="TIGR00628">
    <property type="entry name" value="ung"/>
    <property type="match status" value="1"/>
</dbReference>
<dbReference type="PANTHER" id="PTHR11264">
    <property type="entry name" value="URACIL-DNA GLYCOSYLASE"/>
    <property type="match status" value="1"/>
</dbReference>
<dbReference type="PANTHER" id="PTHR11264:SF0">
    <property type="entry name" value="URACIL-DNA GLYCOSYLASE"/>
    <property type="match status" value="1"/>
</dbReference>
<dbReference type="Pfam" id="PF03167">
    <property type="entry name" value="UDG"/>
    <property type="match status" value="1"/>
</dbReference>
<dbReference type="SMART" id="SM00986">
    <property type="entry name" value="UDG"/>
    <property type="match status" value="1"/>
</dbReference>
<dbReference type="SMART" id="SM00987">
    <property type="entry name" value="UreE_C"/>
    <property type="match status" value="1"/>
</dbReference>
<dbReference type="SUPFAM" id="SSF52141">
    <property type="entry name" value="Uracil-DNA glycosylase-like"/>
    <property type="match status" value="1"/>
</dbReference>
<dbReference type="PROSITE" id="PS00130">
    <property type="entry name" value="U_DNA_GLYCOSYLASE"/>
    <property type="match status" value="1"/>
</dbReference>
<protein>
    <recommendedName>
        <fullName>Uracil-DNA glycosylase</fullName>
        <shortName>UDG</shortName>
        <ecNumber>3.2.2.27</ecNumber>
    </recommendedName>
</protein>
<organism>
    <name type="scientific">Streptococcus agalactiae serotype III (strain NEM316)</name>
    <dbReference type="NCBI Taxonomy" id="211110"/>
    <lineage>
        <taxon>Bacteria</taxon>
        <taxon>Bacillati</taxon>
        <taxon>Bacillota</taxon>
        <taxon>Bacilli</taxon>
        <taxon>Lactobacillales</taxon>
        <taxon>Streptococcaceae</taxon>
        <taxon>Streptococcus</taxon>
    </lineage>
</organism>
<proteinExistence type="inferred from homology"/>
<sequence length="217" mass="24570">MKHSSWHDLIKRELPNHYYNKINTFMDAVYESGIVYPPRDKVFNAIQITPLENVKVVIIGQDPYHGPQQAQGLSFSVPDNLPAPPSLQNILKELAEDIGSRSHHDLTSWAQQGVLLLNACLTVPEHQANGHAGLIWEPFTDAVIKVVNQKETPVVFILWGGYARKKKSLIDNPIHHIIESPHPSPLSAYRGFFGSRPFSRTNHFLEEEGINEIDWLN</sequence>